<comment type="subunit">
    <text evidence="4">Heterotetramer of two type I and two type II keratins.</text>
</comment>
<comment type="miscellaneous">
    <text evidence="4">There are two types of cytoskeletal and microfibrillar keratin, I (acidic) and II (neutral to basic) (40-55 and 56-70 kDa, respectively).</text>
</comment>
<comment type="similarity">
    <text evidence="2">Belongs to the intermediate filament family.</text>
</comment>
<accession>Q8AWA7</accession>
<organism>
    <name type="scientific">Lampetra fluviatilis</name>
    <name type="common">European river lamprey</name>
    <name type="synonym">Petromyzon fluviatilis</name>
    <dbReference type="NCBI Taxonomy" id="7748"/>
    <lineage>
        <taxon>Eukaryota</taxon>
        <taxon>Metazoa</taxon>
        <taxon>Chordata</taxon>
        <taxon>Craniata</taxon>
        <taxon>Vertebrata</taxon>
        <taxon>Cyclostomata</taxon>
        <taxon>Hyperoartia</taxon>
        <taxon>Petromyzontiformes</taxon>
        <taxon>Petromyzontidae</taxon>
        <taxon>Lampetra</taxon>
    </lineage>
</organism>
<feature type="chain" id="PRO_0000308518" description="Keratin, type 1 cytoskeletal 11">
    <location>
        <begin position="1"/>
        <end position="482"/>
    </location>
</feature>
<feature type="domain" description="IF rod" evidence="2">
    <location>
        <begin position="95"/>
        <end position="406"/>
    </location>
</feature>
<feature type="region of interest" description="Head" evidence="1">
    <location>
        <begin position="1"/>
        <end position="94"/>
    </location>
</feature>
<feature type="region of interest" description="Coil 1A" evidence="1">
    <location>
        <begin position="95"/>
        <end position="130"/>
    </location>
</feature>
<feature type="region of interest" description="Linker 1" evidence="1">
    <location>
        <begin position="131"/>
        <end position="147"/>
    </location>
</feature>
<feature type="region of interest" description="Coil 1B" evidence="1">
    <location>
        <begin position="148"/>
        <end position="239"/>
    </location>
</feature>
<feature type="region of interest" description="Linker 12" evidence="1">
    <location>
        <begin position="240"/>
        <end position="263"/>
    </location>
</feature>
<feature type="region of interest" description="Coil 2" evidence="1">
    <location>
        <begin position="264"/>
        <end position="402"/>
    </location>
</feature>
<feature type="region of interest" description="Tail" evidence="1">
    <location>
        <begin position="403"/>
        <end position="479"/>
    </location>
</feature>
<feature type="region of interest" description="Disordered" evidence="3">
    <location>
        <begin position="421"/>
        <end position="482"/>
    </location>
</feature>
<feature type="compositionally biased region" description="Gly residues" evidence="3">
    <location>
        <begin position="421"/>
        <end position="440"/>
    </location>
</feature>
<feature type="compositionally biased region" description="Gly residues" evidence="3">
    <location>
        <begin position="450"/>
        <end position="463"/>
    </location>
</feature>
<feature type="compositionally biased region" description="Low complexity" evidence="3">
    <location>
        <begin position="464"/>
        <end position="482"/>
    </location>
</feature>
<proteinExistence type="evidence at transcript level"/>
<protein>
    <recommendedName>
        <fullName>Keratin, type 1 cytoskeletal 11</fullName>
    </recommendedName>
    <alternativeName>
        <fullName>Type I keratin 11</fullName>
    </alternativeName>
</protein>
<evidence type="ECO:0000255" key="1"/>
<evidence type="ECO:0000255" key="2">
    <source>
        <dbReference type="PROSITE-ProRule" id="PRU01188"/>
    </source>
</evidence>
<evidence type="ECO:0000256" key="3">
    <source>
        <dbReference type="SAM" id="MobiDB-lite"/>
    </source>
</evidence>
<evidence type="ECO:0000305" key="4"/>
<evidence type="ECO:0000312" key="5">
    <source>
        <dbReference type="EMBL" id="CAC87097.1"/>
    </source>
</evidence>
<reference evidence="5" key="1">
    <citation type="submission" date="2001-08" db="EMBL/GenBank/DDBJ databases">
        <title>Keratin mRNA sequences from Lampetra fluviatilis.</title>
        <authorList>
            <person name="Schultess J."/>
            <person name="Schaffeld M."/>
            <person name="Markl J."/>
        </authorList>
    </citation>
    <scope>NUCLEOTIDE SEQUENCE [MRNA]</scope>
</reference>
<sequence length="482" mass="50969">MSFSSRSIGGYGGMSTRLGRGSASVYEGGGSSGGYRISQSSMGGGGGYGGGYGGGGGYRGGGGYGGGCAISSSFQSFGAFRGGGAGGGGLSGGNEKAEMQGLNDRLAEYIEKVRFLENANQELELRIKELLKGKGPGNKDYSAYYTTMQELRDKILAQIMENARVSLEIDNARLAADDFRSKWETELALRSSVEADINNLRGLLDEYSMARMGLEGEIESLREELIFMRKNHEEELAALRAQLEGSSMSVEVDSTKGKDLHKILAEVRAQYEAMIAKNRVDQEEAFNKQAQSVQVVAVQHSQASQAAKVEVTETRRAMQSLQAELDSLRGLIRSLEDQLQDTEERNARDLSTYTMQIQRLEGELSNLRHGINQQLKEYADLLNMKMKLEAEIATYRRLLEGEDSRMGNISANSTSGLITVSGGGGGGGGGVSGGGGGGGMSMTMTSSSSSGGGGGSSSSGGGSVVKTTTTKESSSYSTGYRS</sequence>
<keyword id="KW-0175">Coiled coil</keyword>
<keyword id="KW-0403">Intermediate filament</keyword>
<keyword id="KW-0416">Keratin</keyword>
<name>K1C11_LAMFL</name>
<dbReference type="EMBL" id="AJ308117">
    <property type="protein sequence ID" value="CAC87097.1"/>
    <property type="molecule type" value="mRNA"/>
</dbReference>
<dbReference type="SMR" id="Q8AWA7"/>
<dbReference type="GO" id="GO:0005882">
    <property type="term" value="C:intermediate filament"/>
    <property type="evidence" value="ECO:0007669"/>
    <property type="project" value="UniProtKB-KW"/>
</dbReference>
<dbReference type="GO" id="GO:0005198">
    <property type="term" value="F:structural molecule activity"/>
    <property type="evidence" value="ECO:0007669"/>
    <property type="project" value="InterPro"/>
</dbReference>
<dbReference type="FunFam" id="1.20.5.1160:FF:000002">
    <property type="entry name" value="Type I keratin 10"/>
    <property type="match status" value="1"/>
</dbReference>
<dbReference type="FunFam" id="1.20.5.170:FF:000002">
    <property type="entry name" value="Type I keratin KA11"/>
    <property type="match status" value="1"/>
</dbReference>
<dbReference type="FunFam" id="1.20.5.500:FF:000001">
    <property type="entry name" value="Type II keratin 23"/>
    <property type="match status" value="1"/>
</dbReference>
<dbReference type="Gene3D" id="1.20.5.170">
    <property type="match status" value="1"/>
</dbReference>
<dbReference type="Gene3D" id="1.20.5.500">
    <property type="entry name" value="Single helix bin"/>
    <property type="match status" value="1"/>
</dbReference>
<dbReference type="Gene3D" id="1.20.5.1160">
    <property type="entry name" value="Vasodilator-stimulated phosphoprotein"/>
    <property type="match status" value="1"/>
</dbReference>
<dbReference type="InterPro" id="IPR018039">
    <property type="entry name" value="IF_conserved"/>
</dbReference>
<dbReference type="InterPro" id="IPR039008">
    <property type="entry name" value="IF_rod_dom"/>
</dbReference>
<dbReference type="InterPro" id="IPR002957">
    <property type="entry name" value="Keratin_I"/>
</dbReference>
<dbReference type="PANTHER" id="PTHR23239">
    <property type="entry name" value="INTERMEDIATE FILAMENT"/>
    <property type="match status" value="1"/>
</dbReference>
<dbReference type="PANTHER" id="PTHR23239:SF344">
    <property type="entry name" value="KERATIN, TYPE I CYTOSKELETAL 15-LIKE"/>
    <property type="match status" value="1"/>
</dbReference>
<dbReference type="Pfam" id="PF00038">
    <property type="entry name" value="Filament"/>
    <property type="match status" value="1"/>
</dbReference>
<dbReference type="PRINTS" id="PR01248">
    <property type="entry name" value="TYPE1KERATIN"/>
</dbReference>
<dbReference type="SMART" id="SM01391">
    <property type="entry name" value="Filament"/>
    <property type="match status" value="1"/>
</dbReference>
<dbReference type="SUPFAM" id="SSF64593">
    <property type="entry name" value="Intermediate filament protein, coiled coil region"/>
    <property type="match status" value="2"/>
</dbReference>
<dbReference type="PROSITE" id="PS00226">
    <property type="entry name" value="IF_ROD_1"/>
    <property type="match status" value="1"/>
</dbReference>
<dbReference type="PROSITE" id="PS51842">
    <property type="entry name" value="IF_ROD_2"/>
    <property type="match status" value="1"/>
</dbReference>